<accession>P04021</accession>
<accession>Q76ZW5</accession>
<proteinExistence type="evidence at protein level"/>
<name>PG057_VACCW</name>
<dbReference type="EC" id="3.1.1.-" evidence="10"/>
<dbReference type="EC" id="3.1.4.4" evidence="10"/>
<dbReference type="EMBL" id="M12882">
    <property type="protein sequence ID" value="AAA48235.1"/>
    <property type="molecule type" value="Genomic_DNA"/>
</dbReference>
<dbReference type="EMBL" id="AY243312">
    <property type="protein sequence ID" value="AAO89331.1"/>
    <property type="molecule type" value="Genomic_DNA"/>
</dbReference>
<dbReference type="PIR" id="A03869">
    <property type="entry name" value="WMVZ37"/>
</dbReference>
<dbReference type="RefSeq" id="YP_232934.1">
    <property type="nucleotide sequence ID" value="NC_006998.1"/>
</dbReference>
<dbReference type="PDB" id="9FHK">
    <property type="method" value="X-ray"/>
    <property type="resolution" value="2.10 A"/>
    <property type="chains" value="A/B=5-372"/>
</dbReference>
<dbReference type="PDB" id="9FHS">
    <property type="method" value="X-ray"/>
    <property type="resolution" value="2.82 A"/>
    <property type="chains" value="A=6-372"/>
</dbReference>
<dbReference type="PDB" id="9FIZ">
    <property type="method" value="X-ray"/>
    <property type="resolution" value="2.60 A"/>
    <property type="chains" value="A=6-372"/>
</dbReference>
<dbReference type="PDB" id="9FJ0">
    <property type="method" value="X-ray"/>
    <property type="resolution" value="4.00 A"/>
    <property type="chains" value="A=6-372"/>
</dbReference>
<dbReference type="PDB" id="9FJ1">
    <property type="method" value="X-ray"/>
    <property type="resolution" value="3.80 A"/>
    <property type="chains" value="A=5-372"/>
</dbReference>
<dbReference type="PDB" id="9FJA">
    <property type="method" value="X-ray"/>
    <property type="resolution" value="3.50 A"/>
    <property type="chains" value="A=6-372"/>
</dbReference>
<dbReference type="PDB" id="9HAH">
    <property type="method" value="X-ray"/>
    <property type="resolution" value="2.60 A"/>
    <property type="chains" value="A=5-372"/>
</dbReference>
<dbReference type="PDBsum" id="9FHK"/>
<dbReference type="PDBsum" id="9FHS"/>
<dbReference type="PDBsum" id="9FIZ"/>
<dbReference type="PDBsum" id="9FJ0"/>
<dbReference type="PDBsum" id="9FJ1"/>
<dbReference type="PDBsum" id="9FJA"/>
<dbReference type="PDBsum" id="9HAH"/>
<dbReference type="SMR" id="P04021"/>
<dbReference type="IntAct" id="P04021">
    <property type="interactions" value="2"/>
</dbReference>
<dbReference type="MINT" id="P04021"/>
<dbReference type="BindingDB" id="P04021"/>
<dbReference type="ChEMBL" id="CHEMBL4296170"/>
<dbReference type="SwissPalm" id="P04021"/>
<dbReference type="DNASU" id="3707509"/>
<dbReference type="GeneID" id="3707509"/>
<dbReference type="KEGG" id="vg:3707509"/>
<dbReference type="Proteomes" id="UP000000344">
    <property type="component" value="Genome"/>
</dbReference>
<dbReference type="GO" id="GO:0044167">
    <property type="term" value="C:host cell endoplasmic reticulum membrane"/>
    <property type="evidence" value="ECO:0000314"/>
    <property type="project" value="UniProtKB"/>
</dbReference>
<dbReference type="GO" id="GO:0044177">
    <property type="term" value="C:host cell Golgi apparatus"/>
    <property type="evidence" value="ECO:0007669"/>
    <property type="project" value="UniProtKB-SubCell"/>
</dbReference>
<dbReference type="GO" id="GO:0016020">
    <property type="term" value="C:membrane"/>
    <property type="evidence" value="ECO:0007669"/>
    <property type="project" value="UniProtKB-KW"/>
</dbReference>
<dbReference type="GO" id="GO:0019031">
    <property type="term" value="C:viral envelope"/>
    <property type="evidence" value="ECO:0007669"/>
    <property type="project" value="UniProtKB-KW"/>
</dbReference>
<dbReference type="GO" id="GO:0036338">
    <property type="term" value="C:viral membrane"/>
    <property type="evidence" value="ECO:0000314"/>
    <property type="project" value="UniProtKB"/>
</dbReference>
<dbReference type="GO" id="GO:0055036">
    <property type="term" value="C:virion membrane"/>
    <property type="evidence" value="ECO:0007669"/>
    <property type="project" value="UniProtKB-SubCell"/>
</dbReference>
<dbReference type="GO" id="GO:0004630">
    <property type="term" value="F:phospholipase D activity"/>
    <property type="evidence" value="ECO:0007669"/>
    <property type="project" value="RHEA"/>
</dbReference>
<dbReference type="GO" id="GO:0046760">
    <property type="term" value="P:viral budding from Golgi membrane"/>
    <property type="evidence" value="ECO:0000314"/>
    <property type="project" value="UniProtKB"/>
</dbReference>
<dbReference type="GO" id="GO:0039702">
    <property type="term" value="P:viral budding via host ESCRT complex"/>
    <property type="evidence" value="ECO:0000314"/>
    <property type="project" value="UniProtKB"/>
</dbReference>
<dbReference type="CDD" id="cd09106">
    <property type="entry name" value="PLDc_vPLD3_4_5_like_1"/>
    <property type="match status" value="1"/>
</dbReference>
<dbReference type="CDD" id="cd09107">
    <property type="entry name" value="PLDc_vPLD3_4_5_like_2"/>
    <property type="match status" value="1"/>
</dbReference>
<dbReference type="FunFam" id="3.30.870.10:FF:000040">
    <property type="entry name" value="Envelope phospholipase F13"/>
    <property type="match status" value="1"/>
</dbReference>
<dbReference type="FunFam" id="3.30.870.10:FF:000041">
    <property type="entry name" value="Envelope phospholipase F13"/>
    <property type="match status" value="1"/>
</dbReference>
<dbReference type="Gene3D" id="3.30.870.10">
    <property type="entry name" value="Endonuclease Chain A"/>
    <property type="match status" value="2"/>
</dbReference>
<dbReference type="InterPro" id="IPR050874">
    <property type="entry name" value="Diverse_PLD-related"/>
</dbReference>
<dbReference type="InterPro" id="IPR032803">
    <property type="entry name" value="PLDc_3"/>
</dbReference>
<dbReference type="InterPro" id="IPR001736">
    <property type="entry name" value="PLipase_D/transphosphatidylase"/>
</dbReference>
<dbReference type="PANTHER" id="PTHR10185:SF17">
    <property type="entry name" value="GM01519P-RELATED"/>
    <property type="match status" value="1"/>
</dbReference>
<dbReference type="PANTHER" id="PTHR10185">
    <property type="entry name" value="PHOSPHOLIPASE D - RELATED"/>
    <property type="match status" value="1"/>
</dbReference>
<dbReference type="Pfam" id="PF13918">
    <property type="entry name" value="PLDc_3"/>
    <property type="match status" value="1"/>
</dbReference>
<dbReference type="SMART" id="SM00155">
    <property type="entry name" value="PLDc"/>
    <property type="match status" value="2"/>
</dbReference>
<dbReference type="SUPFAM" id="SSF56024">
    <property type="entry name" value="Phospholipase D/nuclease"/>
    <property type="match status" value="2"/>
</dbReference>
<dbReference type="PROSITE" id="PS50035">
    <property type="entry name" value="PLD"/>
    <property type="match status" value="1"/>
</dbReference>
<reference key="1">
    <citation type="journal article" date="1986" name="J. Virol.">
        <title>Localization and fine structure of a vaccinia virus gene encoding an envelope antigen.</title>
        <authorList>
            <person name="Hirt P."/>
            <person name="Hiller G."/>
            <person name="Wittek R."/>
        </authorList>
    </citation>
    <scope>NUCLEOTIDE SEQUENCE [GENOMIC DNA]</scope>
</reference>
<reference key="2">
    <citation type="submission" date="2003-02" db="EMBL/GenBank/DDBJ databases">
        <title>Sequencing of the coding region of Vaccinia-WR to an average 9-fold redundancy and an error rate of 0.16/10kb.</title>
        <authorList>
            <person name="Esposito J.J."/>
            <person name="Frace A.M."/>
            <person name="Sammons S.A."/>
            <person name="Olsen-Rasmussen M."/>
            <person name="Osborne J."/>
            <person name="Wohlhueter R."/>
        </authorList>
    </citation>
    <scope>NUCLEOTIDE SEQUENCE [LARGE SCALE GENOMIC DNA]</scope>
</reference>
<reference key="3">
    <citation type="journal article" date="1997" name="J. Biol. Chem.">
        <title>Palmitylation of the vaccinia virus 37-kDa major envelope antigen. Identification of a conserved acceptor motif and biological relevance.</title>
        <authorList>
            <person name="Grosenbach D.W."/>
            <person name="Ulaeto D.O."/>
            <person name="Hruby D.E."/>
        </authorList>
    </citation>
    <scope>FUNCTION</scope>
    <scope>PALMITOYLATION AT CYS-185 AND CYS-186</scope>
</reference>
<reference key="4">
    <citation type="journal article" date="1997" name="J. Biol. Chem.">
        <title>Lipase activities of p37, the major envelope protein of vaccinia virus.</title>
        <authorList>
            <person name="Baek S.H."/>
            <person name="Kwak J.Y."/>
            <person name="Lee S.H."/>
            <person name="Lee T."/>
            <person name="Ryu S.H."/>
            <person name="Uhlinger D.J."/>
            <person name="Lambeth J.D."/>
        </authorList>
    </citation>
    <scope>FUNCTION</scope>
    <scope>CATALYTIC ACTIVITY</scope>
</reference>
<reference key="5">
    <citation type="journal article" date="2003" name="Virology">
        <title>Topology of epitope-tagged F13L protein, a major membrane component of extracellular vaccinia virions.</title>
        <authorList>
            <person name="Husain M."/>
            <person name="Weisberg A."/>
            <person name="Moss B."/>
        </authorList>
    </citation>
    <scope>SUBCELLULAR LOCATION</scope>
</reference>
<reference key="6">
    <citation type="journal article" date="2007" name="J. Virol.">
        <title>The vaccinia virus F13L YPPL motif is required for efficient release of extracellular enveloped virus.</title>
        <authorList>
            <person name="Honeychurch K.M."/>
            <person name="Yang G."/>
            <person name="Jordan R."/>
            <person name="Hruby D.E."/>
        </authorList>
    </citation>
    <scope>FUNCTION</scope>
    <scope>DOMAIN LATE-BUDDING</scope>
</reference>
<reference key="7">
    <citation type="journal article" date="2000" name="Virology">
        <title>Identification and analysis of vaccinia virus palmitylproteins.</title>
        <authorList>
            <person name="Grosenbach D.W."/>
            <person name="Hansen S.G."/>
            <person name="Hruby D.E."/>
        </authorList>
    </citation>
    <scope>PALMITOYLATION</scope>
</reference>
<reference key="8">
    <citation type="journal article" date="2012" name="J. Gen. Virol.">
        <title>Mutagenesis of the palmitoylation site in vaccinia virus envelope glycoprotein B5.</title>
        <authorList>
            <person name="Lorenzo M.M."/>
            <person name="Sanchez-Puig J.M."/>
            <person name="Blasco R."/>
        </authorList>
    </citation>
    <scope>INTERACTION WITH PROTEIN OPG190/B5</scope>
</reference>
<reference key="9">
    <citation type="journal article" date="2016" name="J. Virol.">
        <title>Retrograde Transport from Early Endosomes to the trans-Golgi Network Enables Membrane Wrapping and Egress of Vaccinia Virus Virions.</title>
        <authorList>
            <person name="Sivan G."/>
            <person name="Weisberg A.S."/>
            <person name="Americo J.L."/>
            <person name="Moss B."/>
        </authorList>
    </citation>
    <scope>FUNCTION</scope>
    <scope>SUBCELLULAR LOCATION</scope>
</reference>
<reference key="10">
    <citation type="journal article" date="2018" name="J. Virol.">
        <title>Vaccinia Virus Phospholipase Protein F13 Promotes Rapid Entry of Extracellular Virions into Cells.</title>
        <authorList>
            <person name="Bryk P."/>
            <person name="Brewer M.G."/>
            <person name="Ward B.M."/>
        </authorList>
    </citation>
    <scope>FUNCTION</scope>
    <scope>SUBCELLULAR LOCATION</scope>
</reference>
<reference key="11">
    <citation type="journal article" date="2015" name="J. Virol.">
        <title>Deciphering poxvirus gene expression by RNA sequencing and ribosome profiling.</title>
        <authorList>
            <person name="Yang Z."/>
            <person name="Cao S."/>
            <person name="Martens C.A."/>
            <person name="Porcella S.F."/>
            <person name="Xie Z."/>
            <person name="Ma M."/>
            <person name="Shen B."/>
            <person name="Moss B."/>
        </authorList>
    </citation>
    <scope>INDUCTION</scope>
</reference>
<protein>
    <recommendedName>
        <fullName>Envelope phospholipase OPG057</fullName>
        <ecNumber evidence="10">3.1.1.-</ecNumber>
        <ecNumber evidence="10">3.1.4.4</ecNumber>
    </recommendedName>
    <alternativeName>
        <fullName>37 kDa protein</fullName>
    </alternativeName>
    <alternativeName>
        <fullName>Envelope phospholipase F13</fullName>
    </alternativeName>
    <alternativeName>
        <fullName>Palmitoylated EV membrane protein</fullName>
    </alternativeName>
    <alternativeName>
        <fullName>p37K</fullName>
    </alternativeName>
</protein>
<evidence type="ECO:0000255" key="1">
    <source>
        <dbReference type="PROSITE-ProRule" id="PRU00153"/>
    </source>
</evidence>
<evidence type="ECO:0000269" key="2">
    <source>
    </source>
</evidence>
<evidence type="ECO:0000269" key="3">
    <source>
    </source>
</evidence>
<evidence type="ECO:0000269" key="4">
    <source>
    </source>
</evidence>
<evidence type="ECO:0000269" key="5">
    <source>
    </source>
</evidence>
<evidence type="ECO:0000269" key="6">
    <source>
    </source>
</evidence>
<evidence type="ECO:0000269" key="7">
    <source>
    </source>
</evidence>
<evidence type="ECO:0000269" key="8">
    <source>
    </source>
</evidence>
<evidence type="ECO:0000269" key="9">
    <source>
    </source>
</evidence>
<evidence type="ECO:0000269" key="10">
    <source>
    </source>
</evidence>
<evidence type="ECO:0000305" key="11"/>
<keyword id="KW-0002">3D-structure</keyword>
<keyword id="KW-1038">Host endoplasmic reticulum</keyword>
<keyword id="KW-1040">Host Golgi apparatus</keyword>
<keyword id="KW-1043">Host membrane</keyword>
<keyword id="KW-0945">Host-virus interaction</keyword>
<keyword id="KW-0378">Hydrolase</keyword>
<keyword id="KW-0426">Late protein</keyword>
<keyword id="KW-0449">Lipoprotein</keyword>
<keyword id="KW-0472">Membrane</keyword>
<keyword id="KW-0564">Palmitate</keyword>
<keyword id="KW-1185">Reference proteome</keyword>
<keyword id="KW-1198">Viral budding</keyword>
<keyword id="KW-1187">Viral budding via the host ESCRT complexes</keyword>
<keyword id="KW-0261">Viral envelope protein</keyword>
<keyword id="KW-1188">Viral release from host cell</keyword>
<keyword id="KW-0946">Virion</keyword>
<comment type="function">
    <text evidence="4 7 8 9 10">Major envelope protein that plays a role in the biogenesis of the viral double membrane and in egress of virus from the host cell (PubMed:17475658, PubMed:27466413, PubMed:8999886). Produces the wrapped form of virus that is required for cell-to-cell spread (PubMed:27466413, PubMed:29540596). Acts as a lipase with broad specificity including phospholipase C, phospholipase A, and triacylglycerol lipase activities (PubMed:9405398).</text>
</comment>
<comment type="catalytic activity">
    <reaction evidence="10">
        <text>a 1,2-diacyl-sn-glycero-3-phosphocholine + H2O = a 1,2-diacyl-sn-glycero-3-phosphate + choline + H(+)</text>
        <dbReference type="Rhea" id="RHEA:14445"/>
        <dbReference type="ChEBI" id="CHEBI:15354"/>
        <dbReference type="ChEBI" id="CHEBI:15377"/>
        <dbReference type="ChEBI" id="CHEBI:15378"/>
        <dbReference type="ChEBI" id="CHEBI:57643"/>
        <dbReference type="ChEBI" id="CHEBI:58608"/>
        <dbReference type="EC" id="3.1.4.4"/>
    </reaction>
    <physiologicalReaction direction="left-to-right" evidence="10">
        <dbReference type="Rhea" id="RHEA:14446"/>
    </physiologicalReaction>
</comment>
<comment type="subunit">
    <text evidence="5">Interacts with protein OPG190/B5.</text>
</comment>
<comment type="interaction">
    <interactant intactId="EBI-7736497">
        <id>P04021</id>
    </interactant>
    <interactant intactId="EBI-7133633">
        <id>P68617</id>
        <label>OPG161</label>
    </interactant>
    <organismsDiffer>false</organismsDiffer>
    <experiments>2</experiments>
</comment>
<comment type="subcellular location">
    <subcellularLocation>
        <location evidence="3">Virion membrane</location>
        <topology evidence="3">Lipid-anchor</topology>
    </subcellularLocation>
    <subcellularLocation>
        <location evidence="7 8">Host Golgi apparatus</location>
        <location evidence="7 8">Host trans-Golgi network</location>
    </subcellularLocation>
    <subcellularLocation>
        <location evidence="3">Host endoplasmic reticulum membrane</location>
        <topology evidence="3">Lipid-anchor</topology>
        <orientation evidence="3">Cytoplasmic side</orientation>
    </subcellularLocation>
    <text>Component of the inner side of the enveloped virion (EV) membrane. F13 is associated post-translationally with membranes.</text>
</comment>
<comment type="induction">
    <text evidence="6">Expressed in the intermediate phase of the viral replicative cycle.</text>
</comment>
<comment type="domain">
    <text evidence="4">Late-budding domains (L domains) are short sequence motifs essential for viral particle budding. They recruit proteins of the host ESCRT machinery (Endosomal Sorting Complex Required for Transport) or ESCRT-associated proteins. F13 contains one L domain: a YPPL motif, which might interact with PDCD6IP/AIP1.</text>
</comment>
<comment type="PTM">
    <text evidence="2 9">Palmitoylated. Attachment of the palmitate moiety is essential for correct intracellular targeting and protein function.</text>
</comment>
<comment type="similarity">
    <text evidence="11">Belongs to the orthopoxvirus OPG057 family.</text>
</comment>
<sequence length="372" mass="41796">MWPFASVPAGAKCRLVETLPENMDFRSDHLTTFECFNEIITLAKKYIYIASFCCNPLSTTRGALIFDKLKEASEKGIKIIVLLDERGKRNLGELQSHCPDINFITVNIDKKNNVGLLLGCFWVSDDERCYVGNASFTGGSIHTIKTLGVYSDYPPLATDLRRRFDTFKAFNSAKNSWLNLCSAACCLPVSTAYHIKNPIGGVFFTDSPEHLLGYSRDLDTDVVIDKLKSAKTSIDIEHLAIVPTTRVDGNSYYWPDIYNSIIEAAINRGVKIRLLVGNWDKNDVYSMATARSLDALCVQNDLSVKVFTIQNNTKLLIVDDEYVHITSANFDGTHYQNHGFVSFNSIDKQLVSEAKKIFERDWVSSHSKSLKI</sequence>
<gene>
    <name type="primary">OPG057</name>
    <name type="ordered locus">VACWR052</name>
    <name type="ORF">F13L</name>
</gene>
<feature type="chain" id="PRO_0000099198" description="Envelope phospholipase OPG057">
    <location>
        <begin position="1"/>
        <end position="372"/>
    </location>
</feature>
<feature type="domain" description="PLD phosphodiesterase" evidence="1">
    <location>
        <begin position="307"/>
        <end position="334"/>
    </location>
</feature>
<feature type="short sequence motif" description="YPPL">
    <location>
        <begin position="153"/>
        <end position="156"/>
    </location>
</feature>
<feature type="lipid moiety-binding region" description="S-palmitoyl cysteine; by host" evidence="9">
    <location>
        <position position="185"/>
    </location>
</feature>
<feature type="lipid moiety-binding region" description="S-palmitoyl cysteine; by host" evidence="9">
    <location>
        <position position="186"/>
    </location>
</feature>
<organism>
    <name type="scientific">Vaccinia virus (strain Western Reserve)</name>
    <name type="common">VACV</name>
    <name type="synonym">Vaccinia virus (strain WR)</name>
    <dbReference type="NCBI Taxonomy" id="10254"/>
    <lineage>
        <taxon>Viruses</taxon>
        <taxon>Varidnaviria</taxon>
        <taxon>Bamfordvirae</taxon>
        <taxon>Nucleocytoviricota</taxon>
        <taxon>Pokkesviricetes</taxon>
        <taxon>Chitovirales</taxon>
        <taxon>Poxviridae</taxon>
        <taxon>Chordopoxvirinae</taxon>
        <taxon>Orthopoxvirus</taxon>
        <taxon>Vaccinia virus</taxon>
    </lineage>
</organism>
<organismHost>
    <name type="scientific">Bos taurus</name>
    <name type="common">Bovine</name>
    <dbReference type="NCBI Taxonomy" id="9913"/>
</organismHost>